<name>PANC_GEOTN</name>
<reference key="1">
    <citation type="journal article" date="2007" name="Proc. Natl. Acad. Sci. U.S.A.">
        <title>Genome and proteome of long-chain alkane degrading Geobacillus thermodenitrificans NG80-2 isolated from a deep-subsurface oil reservoir.</title>
        <authorList>
            <person name="Feng L."/>
            <person name="Wang W."/>
            <person name="Cheng J."/>
            <person name="Ren Y."/>
            <person name="Zhao G."/>
            <person name="Gao C."/>
            <person name="Tang Y."/>
            <person name="Liu X."/>
            <person name="Han W."/>
            <person name="Peng X."/>
            <person name="Liu R."/>
            <person name="Wang L."/>
        </authorList>
    </citation>
    <scope>NUCLEOTIDE SEQUENCE [LARGE SCALE GENOMIC DNA]</scope>
    <source>
        <strain>NG80-2</strain>
    </source>
</reference>
<dbReference type="EC" id="6.3.2.1" evidence="1"/>
<dbReference type="EMBL" id="CP000557">
    <property type="protein sequence ID" value="ABO67464.1"/>
    <property type="molecule type" value="Genomic_DNA"/>
</dbReference>
<dbReference type="RefSeq" id="WP_008879586.1">
    <property type="nucleotide sequence ID" value="NC_009328.1"/>
</dbReference>
<dbReference type="SMR" id="A4IQ60"/>
<dbReference type="GeneID" id="87623788"/>
<dbReference type="KEGG" id="gtn:GTNG_2112"/>
<dbReference type="eggNOG" id="COG0414">
    <property type="taxonomic scope" value="Bacteria"/>
</dbReference>
<dbReference type="HOGENOM" id="CLU_047148_0_0_9"/>
<dbReference type="UniPathway" id="UPA00028">
    <property type="reaction ID" value="UER00005"/>
</dbReference>
<dbReference type="Proteomes" id="UP000001578">
    <property type="component" value="Chromosome"/>
</dbReference>
<dbReference type="GO" id="GO:0005829">
    <property type="term" value="C:cytosol"/>
    <property type="evidence" value="ECO:0007669"/>
    <property type="project" value="TreeGrafter"/>
</dbReference>
<dbReference type="GO" id="GO:0005524">
    <property type="term" value="F:ATP binding"/>
    <property type="evidence" value="ECO:0007669"/>
    <property type="project" value="UniProtKB-KW"/>
</dbReference>
<dbReference type="GO" id="GO:0004592">
    <property type="term" value="F:pantoate-beta-alanine ligase activity"/>
    <property type="evidence" value="ECO:0007669"/>
    <property type="project" value="UniProtKB-UniRule"/>
</dbReference>
<dbReference type="GO" id="GO:0015940">
    <property type="term" value="P:pantothenate biosynthetic process"/>
    <property type="evidence" value="ECO:0007669"/>
    <property type="project" value="UniProtKB-UniRule"/>
</dbReference>
<dbReference type="CDD" id="cd00560">
    <property type="entry name" value="PanC"/>
    <property type="match status" value="1"/>
</dbReference>
<dbReference type="FunFam" id="3.30.1300.10:FF:000001">
    <property type="entry name" value="Pantothenate synthetase"/>
    <property type="match status" value="1"/>
</dbReference>
<dbReference type="FunFam" id="3.40.50.620:FF:000013">
    <property type="entry name" value="Pantothenate synthetase"/>
    <property type="match status" value="1"/>
</dbReference>
<dbReference type="Gene3D" id="3.40.50.620">
    <property type="entry name" value="HUPs"/>
    <property type="match status" value="1"/>
</dbReference>
<dbReference type="Gene3D" id="3.30.1300.10">
    <property type="entry name" value="Pantoate-beta-alanine ligase, C-terminal domain"/>
    <property type="match status" value="1"/>
</dbReference>
<dbReference type="HAMAP" id="MF_00158">
    <property type="entry name" value="PanC"/>
    <property type="match status" value="1"/>
</dbReference>
<dbReference type="InterPro" id="IPR004821">
    <property type="entry name" value="Cyt_trans-like"/>
</dbReference>
<dbReference type="InterPro" id="IPR003721">
    <property type="entry name" value="Pantoate_ligase"/>
</dbReference>
<dbReference type="InterPro" id="IPR042176">
    <property type="entry name" value="Pantoate_ligase_C"/>
</dbReference>
<dbReference type="InterPro" id="IPR014729">
    <property type="entry name" value="Rossmann-like_a/b/a_fold"/>
</dbReference>
<dbReference type="NCBIfam" id="TIGR00125">
    <property type="entry name" value="cyt_tran_rel"/>
    <property type="match status" value="1"/>
</dbReference>
<dbReference type="NCBIfam" id="TIGR00018">
    <property type="entry name" value="panC"/>
    <property type="match status" value="1"/>
</dbReference>
<dbReference type="PANTHER" id="PTHR21299">
    <property type="entry name" value="CYTIDYLATE KINASE/PANTOATE-BETA-ALANINE LIGASE"/>
    <property type="match status" value="1"/>
</dbReference>
<dbReference type="PANTHER" id="PTHR21299:SF1">
    <property type="entry name" value="PANTOATE--BETA-ALANINE LIGASE"/>
    <property type="match status" value="1"/>
</dbReference>
<dbReference type="Pfam" id="PF02569">
    <property type="entry name" value="Pantoate_ligase"/>
    <property type="match status" value="1"/>
</dbReference>
<dbReference type="SUPFAM" id="SSF52374">
    <property type="entry name" value="Nucleotidylyl transferase"/>
    <property type="match status" value="1"/>
</dbReference>
<accession>A4IQ60</accession>
<sequence>MIIVDRISEMQALMRQYHREGKTIGFVPTMGYLHEGHAALIDRARQENDIVVLSVFVNPLQFGPNEDFARYPRDFERDRHIAEQHGVDVLFHPEAGEMYPGPLTVQVVVKARTDVLCGRSRPGHFDGVATVLTKLFHIVMPDRAYFGLKDAQQVAVVDGLIRDFNFPIELVPVPTVREADGLAKSSRNVYLSPQEREEAPALYQALRAAAAAVDGGERSADAIRRLVKEHIEAHTHAEIDYVEVCSYPDLAPLETLHGTVLVAVAVRFASARLIDNIILELPKAHRQED</sequence>
<feature type="chain" id="PRO_0000305457" description="Pantothenate synthetase">
    <location>
        <begin position="1"/>
        <end position="289"/>
    </location>
</feature>
<feature type="active site" description="Proton donor" evidence="1">
    <location>
        <position position="37"/>
    </location>
</feature>
<feature type="binding site" evidence="1">
    <location>
        <begin position="30"/>
        <end position="37"/>
    </location>
    <ligand>
        <name>ATP</name>
        <dbReference type="ChEBI" id="CHEBI:30616"/>
    </ligand>
</feature>
<feature type="binding site" evidence="1">
    <location>
        <position position="61"/>
    </location>
    <ligand>
        <name>(R)-pantoate</name>
        <dbReference type="ChEBI" id="CHEBI:15980"/>
    </ligand>
</feature>
<feature type="binding site" evidence="1">
    <location>
        <position position="61"/>
    </location>
    <ligand>
        <name>beta-alanine</name>
        <dbReference type="ChEBI" id="CHEBI:57966"/>
    </ligand>
</feature>
<feature type="binding site" evidence="1">
    <location>
        <begin position="147"/>
        <end position="150"/>
    </location>
    <ligand>
        <name>ATP</name>
        <dbReference type="ChEBI" id="CHEBI:30616"/>
    </ligand>
</feature>
<feature type="binding site" evidence="1">
    <location>
        <position position="153"/>
    </location>
    <ligand>
        <name>(R)-pantoate</name>
        <dbReference type="ChEBI" id="CHEBI:15980"/>
    </ligand>
</feature>
<feature type="binding site" evidence="1">
    <location>
        <position position="176"/>
    </location>
    <ligand>
        <name>ATP</name>
        <dbReference type="ChEBI" id="CHEBI:30616"/>
    </ligand>
</feature>
<feature type="binding site" evidence="1">
    <location>
        <begin position="184"/>
        <end position="187"/>
    </location>
    <ligand>
        <name>ATP</name>
        <dbReference type="ChEBI" id="CHEBI:30616"/>
    </ligand>
</feature>
<organism>
    <name type="scientific">Geobacillus thermodenitrificans (strain NG80-2)</name>
    <dbReference type="NCBI Taxonomy" id="420246"/>
    <lineage>
        <taxon>Bacteria</taxon>
        <taxon>Bacillati</taxon>
        <taxon>Bacillota</taxon>
        <taxon>Bacilli</taxon>
        <taxon>Bacillales</taxon>
        <taxon>Anoxybacillaceae</taxon>
        <taxon>Geobacillus</taxon>
    </lineage>
</organism>
<gene>
    <name evidence="1" type="primary">panC</name>
    <name type="ordered locus">GTNG_2112</name>
</gene>
<evidence type="ECO:0000255" key="1">
    <source>
        <dbReference type="HAMAP-Rule" id="MF_00158"/>
    </source>
</evidence>
<proteinExistence type="inferred from homology"/>
<comment type="function">
    <text evidence="1">Catalyzes the condensation of pantoate with beta-alanine in an ATP-dependent reaction via a pantoyl-adenylate intermediate.</text>
</comment>
<comment type="catalytic activity">
    <reaction evidence="1">
        <text>(R)-pantoate + beta-alanine + ATP = (R)-pantothenate + AMP + diphosphate + H(+)</text>
        <dbReference type="Rhea" id="RHEA:10912"/>
        <dbReference type="ChEBI" id="CHEBI:15378"/>
        <dbReference type="ChEBI" id="CHEBI:15980"/>
        <dbReference type="ChEBI" id="CHEBI:29032"/>
        <dbReference type="ChEBI" id="CHEBI:30616"/>
        <dbReference type="ChEBI" id="CHEBI:33019"/>
        <dbReference type="ChEBI" id="CHEBI:57966"/>
        <dbReference type="ChEBI" id="CHEBI:456215"/>
        <dbReference type="EC" id="6.3.2.1"/>
    </reaction>
</comment>
<comment type="pathway">
    <text evidence="1">Cofactor biosynthesis; (R)-pantothenate biosynthesis; (R)-pantothenate from (R)-pantoate and beta-alanine: step 1/1.</text>
</comment>
<comment type="subunit">
    <text evidence="1">Homodimer.</text>
</comment>
<comment type="subcellular location">
    <subcellularLocation>
        <location evidence="1">Cytoplasm</location>
    </subcellularLocation>
</comment>
<comment type="miscellaneous">
    <text evidence="1">The reaction proceeds by a bi uni uni bi ping pong mechanism.</text>
</comment>
<comment type="similarity">
    <text evidence="1">Belongs to the pantothenate synthetase family.</text>
</comment>
<keyword id="KW-0067">ATP-binding</keyword>
<keyword id="KW-0963">Cytoplasm</keyword>
<keyword id="KW-0436">Ligase</keyword>
<keyword id="KW-0547">Nucleotide-binding</keyword>
<keyword id="KW-0566">Pantothenate biosynthesis</keyword>
<protein>
    <recommendedName>
        <fullName evidence="1">Pantothenate synthetase</fullName>
        <shortName evidence="1">PS</shortName>
        <ecNumber evidence="1">6.3.2.1</ecNumber>
    </recommendedName>
    <alternativeName>
        <fullName evidence="1">Pantoate--beta-alanine ligase</fullName>
    </alternativeName>
    <alternativeName>
        <fullName evidence="1">Pantoate-activating enzyme</fullName>
    </alternativeName>
</protein>